<dbReference type="EC" id="3.1.3.7" evidence="6"/>
<dbReference type="EMBL" id="AL772346">
    <property type="status" value="NOT_ANNOTATED_CDS"/>
    <property type="molecule type" value="Genomic_DNA"/>
</dbReference>
<dbReference type="EMBL" id="CH466538">
    <property type="protein sequence ID" value="EDL05698.1"/>
    <property type="molecule type" value="Genomic_DNA"/>
</dbReference>
<dbReference type="EMBL" id="BC048776">
    <property type="protein sequence ID" value="AAH48776.1"/>
    <property type="molecule type" value="mRNA"/>
</dbReference>
<dbReference type="EMBL" id="BC138209">
    <property type="protein sequence ID" value="AAI38210.1"/>
    <property type="molecule type" value="mRNA"/>
</dbReference>
<dbReference type="EMBL" id="BC145952">
    <property type="protein sequence ID" value="AAI45953.1"/>
    <property type="molecule type" value="mRNA"/>
</dbReference>
<dbReference type="CCDS" id="CCDS17947.1"/>
<dbReference type="RefSeq" id="NP_808398.1">
    <property type="nucleotide sequence ID" value="NM_177730.4"/>
</dbReference>
<dbReference type="SMR" id="Q80V26"/>
<dbReference type="BioGRID" id="232391">
    <property type="interactions" value="2"/>
</dbReference>
<dbReference type="FunCoup" id="Q80V26">
    <property type="interactions" value="3401"/>
</dbReference>
<dbReference type="STRING" id="10090.ENSMUSP00000082013"/>
<dbReference type="GlyCosmos" id="Q80V26">
    <property type="glycosylation" value="1 site, No reported glycans"/>
</dbReference>
<dbReference type="GlyGen" id="Q80V26">
    <property type="glycosylation" value="1 site, 1 N-linked glycan (1 site)"/>
</dbReference>
<dbReference type="PhosphoSitePlus" id="Q80V26"/>
<dbReference type="SwissPalm" id="Q80V26"/>
<dbReference type="jPOST" id="Q80V26"/>
<dbReference type="PaxDb" id="10090-ENSMUSP00000082013"/>
<dbReference type="PeptideAtlas" id="Q80V26"/>
<dbReference type="ProteomicsDB" id="267333"/>
<dbReference type="Pumba" id="Q80V26"/>
<dbReference type="TopDownProteomics" id="Q80V26"/>
<dbReference type="Antibodypedia" id="2290">
    <property type="antibodies" value="106 antibodies from 24 providers"/>
</dbReference>
<dbReference type="DNASU" id="242291"/>
<dbReference type="Ensembl" id="ENSMUST00000084949.3">
    <property type="protein sequence ID" value="ENSMUSP00000082013.3"/>
    <property type="gene ID" value="ENSMUSG00000066324.3"/>
</dbReference>
<dbReference type="GeneID" id="242291"/>
<dbReference type="KEGG" id="mmu:242291"/>
<dbReference type="UCSC" id="uc008rxc.2">
    <property type="organism name" value="mouse"/>
</dbReference>
<dbReference type="AGR" id="MGI:1915720"/>
<dbReference type="CTD" id="54928"/>
<dbReference type="MGI" id="MGI:1915720">
    <property type="gene designation" value="Bpnt2"/>
</dbReference>
<dbReference type="VEuPathDB" id="HostDB:ENSMUSG00000066324"/>
<dbReference type="eggNOG" id="KOG3853">
    <property type="taxonomic scope" value="Eukaryota"/>
</dbReference>
<dbReference type="GeneTree" id="ENSGT00940000160216"/>
<dbReference type="HOGENOM" id="CLU_034742_0_0_1"/>
<dbReference type="InParanoid" id="Q80V26"/>
<dbReference type="OMA" id="VKQVAWQ"/>
<dbReference type="OrthoDB" id="74460at2759"/>
<dbReference type="PhylomeDB" id="Q80V26"/>
<dbReference type="TreeFam" id="TF314300"/>
<dbReference type="BRENDA" id="3.1.3.7">
    <property type="organism ID" value="3474"/>
</dbReference>
<dbReference type="Reactome" id="R-MMU-156584">
    <property type="pathway name" value="Cytosolic sulfonation of small molecules"/>
</dbReference>
<dbReference type="SABIO-RK" id="Q80V26"/>
<dbReference type="BioGRID-ORCS" id="242291">
    <property type="hits" value="5 hits in 80 CRISPR screens"/>
</dbReference>
<dbReference type="ChiTaRS" id="Impad1">
    <property type="organism name" value="mouse"/>
</dbReference>
<dbReference type="PRO" id="PR:Q80V26"/>
<dbReference type="Proteomes" id="UP000000589">
    <property type="component" value="Chromosome 4"/>
</dbReference>
<dbReference type="RNAct" id="Q80V26">
    <property type="molecule type" value="protein"/>
</dbReference>
<dbReference type="Bgee" id="ENSMUSG00000066324">
    <property type="expression patterns" value="Expressed in rostral migratory stream and 263 other cell types or tissues"/>
</dbReference>
<dbReference type="GO" id="GO:0005829">
    <property type="term" value="C:cytosol"/>
    <property type="evidence" value="ECO:0007669"/>
    <property type="project" value="Ensembl"/>
</dbReference>
<dbReference type="GO" id="GO:0005794">
    <property type="term" value="C:Golgi apparatus"/>
    <property type="evidence" value="ECO:0000266"/>
    <property type="project" value="MGI"/>
</dbReference>
<dbReference type="GO" id="GO:0016604">
    <property type="term" value="C:nuclear body"/>
    <property type="evidence" value="ECO:0007669"/>
    <property type="project" value="Ensembl"/>
</dbReference>
<dbReference type="GO" id="GO:0032588">
    <property type="term" value="C:trans-Golgi network membrane"/>
    <property type="evidence" value="ECO:0000314"/>
    <property type="project" value="UniProtKB"/>
</dbReference>
<dbReference type="GO" id="GO:0008441">
    <property type="term" value="F:3'(2'),5'-bisphosphate nucleotidase activity"/>
    <property type="evidence" value="ECO:0007669"/>
    <property type="project" value="UniProtKB-EC"/>
</dbReference>
<dbReference type="GO" id="GO:0097657">
    <property type="term" value="F:3',5'-nucleotide bisphosphate phosphatase activity"/>
    <property type="evidence" value="ECO:0000314"/>
    <property type="project" value="UniProtKB"/>
</dbReference>
<dbReference type="GO" id="GO:0008254">
    <property type="term" value="F:3'-nucleotidase activity"/>
    <property type="evidence" value="ECO:0000314"/>
    <property type="project" value="MGI"/>
</dbReference>
<dbReference type="GO" id="GO:0046872">
    <property type="term" value="F:metal ion binding"/>
    <property type="evidence" value="ECO:0007669"/>
    <property type="project" value="UniProtKB-KW"/>
</dbReference>
<dbReference type="GO" id="GO:0002063">
    <property type="term" value="P:chondrocyte development"/>
    <property type="evidence" value="ECO:0000315"/>
    <property type="project" value="MGI"/>
</dbReference>
<dbReference type="GO" id="GO:0050654">
    <property type="term" value="P:chondroitin sulfate proteoglycan metabolic process"/>
    <property type="evidence" value="ECO:0000315"/>
    <property type="project" value="MGI"/>
</dbReference>
<dbReference type="GO" id="GO:0042733">
    <property type="term" value="P:embryonic digit morphogenesis"/>
    <property type="evidence" value="ECO:0000315"/>
    <property type="project" value="MGI"/>
</dbReference>
<dbReference type="GO" id="GO:0001958">
    <property type="term" value="P:endochondral ossification"/>
    <property type="evidence" value="ECO:0000315"/>
    <property type="project" value="MGI"/>
</dbReference>
<dbReference type="GO" id="GO:0046854">
    <property type="term" value="P:phosphatidylinositol phosphate biosynthetic process"/>
    <property type="evidence" value="ECO:0007669"/>
    <property type="project" value="InterPro"/>
</dbReference>
<dbReference type="GO" id="GO:0009791">
    <property type="term" value="P:post-embryonic development"/>
    <property type="evidence" value="ECO:0000315"/>
    <property type="project" value="MGI"/>
</dbReference>
<dbReference type="GO" id="GO:0001501">
    <property type="term" value="P:skeletal system development"/>
    <property type="evidence" value="ECO:0000315"/>
    <property type="project" value="MGI"/>
</dbReference>
<dbReference type="CDD" id="cd01640">
    <property type="entry name" value="IPPase"/>
    <property type="match status" value="1"/>
</dbReference>
<dbReference type="FunFam" id="3.30.540.10:FF:000012">
    <property type="entry name" value="Blast:Putative inositol monophosphatase 3"/>
    <property type="match status" value="1"/>
</dbReference>
<dbReference type="FunFam" id="3.40.190.80:FF:000007">
    <property type="entry name" value="Blast:Putative inositol monophosphatase 3"/>
    <property type="match status" value="1"/>
</dbReference>
<dbReference type="Gene3D" id="3.40.190.80">
    <property type="match status" value="1"/>
</dbReference>
<dbReference type="Gene3D" id="3.30.540.10">
    <property type="entry name" value="Fructose-1,6-Bisphosphatase, subunit A, domain 1"/>
    <property type="match status" value="1"/>
</dbReference>
<dbReference type="InterPro" id="IPR050725">
    <property type="entry name" value="CysQ/Inositol_MonoPase"/>
</dbReference>
<dbReference type="InterPro" id="IPR000760">
    <property type="entry name" value="Inositol_monophosphatase-like"/>
</dbReference>
<dbReference type="InterPro" id="IPR020550">
    <property type="entry name" value="Inositol_monophosphatase_CS"/>
</dbReference>
<dbReference type="PANTHER" id="PTHR43028">
    <property type="entry name" value="3'(2'),5'-BISPHOSPHATE NUCLEOTIDASE 1"/>
    <property type="match status" value="1"/>
</dbReference>
<dbReference type="PANTHER" id="PTHR43028:SF6">
    <property type="entry name" value="GOLGI-RESIDENT ADENOSINE 3',5'-BISPHOSPHATE 3'-PHOSPHATASE"/>
    <property type="match status" value="1"/>
</dbReference>
<dbReference type="Pfam" id="PF00459">
    <property type="entry name" value="Inositol_P"/>
    <property type="match status" value="1"/>
</dbReference>
<dbReference type="SUPFAM" id="SSF56655">
    <property type="entry name" value="Carbohydrate phosphatase"/>
    <property type="match status" value="1"/>
</dbReference>
<dbReference type="PROSITE" id="PS00630">
    <property type="entry name" value="IMP_2"/>
    <property type="match status" value="1"/>
</dbReference>
<gene>
    <name evidence="10" type="primary">Bpnt2</name>
    <name evidence="10" type="synonym">Impa3</name>
    <name evidence="10" type="synonym">Impad1</name>
</gene>
<keyword id="KW-0007">Acetylation</keyword>
<keyword id="KW-0325">Glycoprotein</keyword>
<keyword id="KW-0333">Golgi apparatus</keyword>
<keyword id="KW-0378">Hydrolase</keyword>
<keyword id="KW-0460">Magnesium</keyword>
<keyword id="KW-0472">Membrane</keyword>
<keyword id="KW-0479">Metal-binding</keyword>
<keyword id="KW-1185">Reference proteome</keyword>
<keyword id="KW-0735">Signal-anchor</keyword>
<keyword id="KW-0812">Transmembrane</keyword>
<keyword id="KW-1133">Transmembrane helix</keyword>
<evidence type="ECO:0000250" key="1"/>
<evidence type="ECO:0000250" key="2">
    <source>
        <dbReference type="UniProtKB" id="Q9NX62"/>
    </source>
</evidence>
<evidence type="ECO:0000250" key="3">
    <source>
        <dbReference type="UniProtKB" id="Q9Z1N4"/>
    </source>
</evidence>
<evidence type="ECO:0000255" key="4"/>
<evidence type="ECO:0000256" key="5">
    <source>
        <dbReference type="SAM" id="MobiDB-lite"/>
    </source>
</evidence>
<evidence type="ECO:0000269" key="6">
    <source>
    </source>
</evidence>
<evidence type="ECO:0000303" key="7">
    <source>
    </source>
</evidence>
<evidence type="ECO:0000305" key="8"/>
<evidence type="ECO:0000305" key="9">
    <source>
    </source>
</evidence>
<evidence type="ECO:0000312" key="10">
    <source>
        <dbReference type="MGI" id="MGI:1915720"/>
    </source>
</evidence>
<reference key="1">
    <citation type="journal article" date="2009" name="PLoS Biol.">
        <title>Lineage-specific biology revealed by a finished genome assembly of the mouse.</title>
        <authorList>
            <person name="Church D.M."/>
            <person name="Goodstadt L."/>
            <person name="Hillier L.W."/>
            <person name="Zody M.C."/>
            <person name="Goldstein S."/>
            <person name="She X."/>
            <person name="Bult C.J."/>
            <person name="Agarwala R."/>
            <person name="Cherry J.L."/>
            <person name="DiCuccio M."/>
            <person name="Hlavina W."/>
            <person name="Kapustin Y."/>
            <person name="Meric P."/>
            <person name="Maglott D."/>
            <person name="Birtle Z."/>
            <person name="Marques A.C."/>
            <person name="Graves T."/>
            <person name="Zhou S."/>
            <person name="Teague B."/>
            <person name="Potamousis K."/>
            <person name="Churas C."/>
            <person name="Place M."/>
            <person name="Herschleb J."/>
            <person name="Runnheim R."/>
            <person name="Forrest D."/>
            <person name="Amos-Landgraf J."/>
            <person name="Schwartz D.C."/>
            <person name="Cheng Z."/>
            <person name="Lindblad-Toh K."/>
            <person name="Eichler E.E."/>
            <person name="Ponting C.P."/>
        </authorList>
    </citation>
    <scope>NUCLEOTIDE SEQUENCE [LARGE SCALE GENOMIC DNA]</scope>
    <source>
        <strain>C57BL/6J</strain>
    </source>
</reference>
<reference key="2">
    <citation type="submission" date="2005-09" db="EMBL/GenBank/DDBJ databases">
        <authorList>
            <person name="Mural R.J."/>
            <person name="Adams M.D."/>
            <person name="Myers E.W."/>
            <person name="Smith H.O."/>
            <person name="Venter J.C."/>
        </authorList>
    </citation>
    <scope>NUCLEOTIDE SEQUENCE [LARGE SCALE GENOMIC DNA]</scope>
</reference>
<reference key="3">
    <citation type="journal article" date="2004" name="Genome Res.">
        <title>The status, quality, and expansion of the NIH full-length cDNA project: the Mammalian Gene Collection (MGC).</title>
        <authorList>
            <consortium name="The MGC Project Team"/>
        </authorList>
    </citation>
    <scope>NUCLEOTIDE SEQUENCE [LARGE SCALE MRNA]</scope>
    <source>
        <strain>FVB/N-3</strain>
        <tissue>Mammary tumor</tissue>
    </source>
</reference>
<reference key="4">
    <citation type="journal article" date="2008" name="Proc. Natl. Acad. Sci. U.S.A.">
        <title>A role for a lithium-inhibited Golgi nucleotidase in skeletal development and sulfation.</title>
        <authorList>
            <person name="Frederick J.P."/>
            <person name="Tafari A.T."/>
            <person name="Wu S.M."/>
            <person name="Megosh L.C."/>
            <person name="Chiou S.T."/>
            <person name="Irving R.P."/>
            <person name="York J.D."/>
        </authorList>
    </citation>
    <scope>FUNCTION</scope>
    <scope>CATALYTIC ACTIVITY</scope>
    <scope>ACTIVITY REGULATION</scope>
    <scope>BIOPHYSICOCHEMICAL PROPERTIES</scope>
    <scope>SUBCELLULAR LOCATION</scope>
    <scope>DEVELOPMENTAL STAGE</scope>
    <scope>TOPOLOGY</scope>
    <scope>DISRUPTION PHENOTYPE</scope>
    <scope>PATHWAY</scope>
</reference>
<reference key="5">
    <citation type="journal article" date="2010" name="Cell">
        <title>A tissue-specific atlas of mouse protein phosphorylation and expression.</title>
        <authorList>
            <person name="Huttlin E.L."/>
            <person name="Jedrychowski M.P."/>
            <person name="Elias J.E."/>
            <person name="Goswami T."/>
            <person name="Rad R."/>
            <person name="Beausoleil S.A."/>
            <person name="Villen J."/>
            <person name="Haas W."/>
            <person name="Sowa M.E."/>
            <person name="Gygi S.P."/>
        </authorList>
    </citation>
    <scope>IDENTIFICATION BY MASS SPECTROMETRY [LARGE SCALE ANALYSIS]</scope>
    <source>
        <tissue>Heart</tissue>
        <tissue>Kidney</tissue>
        <tissue>Liver</tissue>
        <tissue>Lung</tissue>
        <tissue>Pancreas</tissue>
        <tissue>Testis</tissue>
    </source>
</reference>
<organism>
    <name type="scientific">Mus musculus</name>
    <name type="common">Mouse</name>
    <dbReference type="NCBI Taxonomy" id="10090"/>
    <lineage>
        <taxon>Eukaryota</taxon>
        <taxon>Metazoa</taxon>
        <taxon>Chordata</taxon>
        <taxon>Craniata</taxon>
        <taxon>Vertebrata</taxon>
        <taxon>Euteleostomi</taxon>
        <taxon>Mammalia</taxon>
        <taxon>Eutheria</taxon>
        <taxon>Euarchontoglires</taxon>
        <taxon>Glires</taxon>
        <taxon>Rodentia</taxon>
        <taxon>Myomorpha</taxon>
        <taxon>Muroidea</taxon>
        <taxon>Muridae</taxon>
        <taxon>Murinae</taxon>
        <taxon>Mus</taxon>
        <taxon>Mus</taxon>
    </lineage>
</organism>
<comment type="function">
    <text evidence="6">Exhibits 3'-nucleotidase activity toward adenosine 3',5'-bisphosphate (PAP), namely hydrolyzes adenosine 3',5'-bisphosphate into adenosine 5'-monophosphate (AMP) and a phosphate (PubMed:18695242). May play a role in the formation of skeletal elements derived through endochondral ossification, possibly by clearing adenosine 3',5'-bisphosphate produced by Golgi sulfotransferases during glycosaminoglycan sulfation (PubMed:18695242). Has no activity toward 3'-phosphoadenosine 5'-phosphosulfate (PAPS) or inositol phosphate (IP) substrates including I(1)P, I(1,4)P2, I(1,3,4)P3, I(1,4,5)P3 and I(1,3,4,5)P4.</text>
</comment>
<comment type="catalytic activity">
    <reaction evidence="6">
        <text>adenosine 3',5'-bisphosphate + H2O = AMP + phosphate</text>
        <dbReference type="Rhea" id="RHEA:10040"/>
        <dbReference type="ChEBI" id="CHEBI:15377"/>
        <dbReference type="ChEBI" id="CHEBI:43474"/>
        <dbReference type="ChEBI" id="CHEBI:58343"/>
        <dbReference type="ChEBI" id="CHEBI:456215"/>
        <dbReference type="EC" id="3.1.3.7"/>
    </reaction>
</comment>
<comment type="cofactor">
    <cofactor evidence="1">
        <name>Mg(2+)</name>
        <dbReference type="ChEBI" id="CHEBI:18420"/>
    </cofactor>
</comment>
<comment type="activity regulation">
    <text evidence="6">Strongly inhibited by lithium.</text>
</comment>
<comment type="biophysicochemical properties">
    <kinetics>
        <KM evidence="6">21 uM for 3'-phosphoadenosine 5'- phosphate (PAP)</KM>
        <Vmax evidence="6">9.5 umol/min/mg enzyme</Vmax>
    </kinetics>
</comment>
<comment type="pathway">
    <text evidence="9">Sulfur metabolism.</text>
</comment>
<comment type="subcellular location">
    <subcellularLocation>
        <location evidence="6">Golgi apparatus</location>
    </subcellularLocation>
    <subcellularLocation>
        <location evidence="6">Golgi apparatus</location>
        <location evidence="6">trans-Golgi network membrane</location>
        <topology evidence="2">Single-pass type II membrane protein</topology>
    </subcellularLocation>
    <text evidence="2">The catalytic core is predicted to reside within the Golgi lumen.</text>
</comment>
<comment type="developmental stage">
    <text evidence="6">At 18.5 dpc, widely expressed with enhanced levels in brain, spinal cord, lung and kidney, including medulla and cortex. In the developing brain, strongly expressed in the neopallial cortex and throughout the cerebellum with intense expression within the developing Purkinje cells and adjacent choroid plexus. Strong expression also observed within the pons and throughout the medulla oblongata. In the lung, expressed in individual pneumocytes and particularly in cells surrounding developing bronchi/bronchioles. Moderate expression in chondrocytes of costal cartilage and in the surrounding perichondrium.</text>
</comment>
<comment type="PTM">
    <text evidence="2">N-glycosylated (By similarity). Contains N-linked glycan resistant to endoglycosydase H (By similarity).</text>
</comment>
<comment type="disruption phenotype">
    <text evidence="6">Mutant animals experience severe respiratory distress and died within minutes after birth. At 18.5 dpc, lungs exhibit small alveolar spaces and thickened septa. The rib cage cartilage is hypocellular with abnormal, fibrous-appearing extracellular matrix. Animals show severe skeletal abnormalities, most notably in the longitudinal growth of bones formed by endochondral ossification. The length of the axial skeleton is reduced. The appendicular bones of the upper limbs, as well as the ilium, femur, tibia and fibula of the lower limbs are markedly shorter than in wild-type littermates. The rib cages display malformation characterized by reduced sternal length and correspondingly diminished rib spacing. The process of intramembranous ossification is normal. Mutant animals exhibit a deficiency in glycosaminoglycan sulfation. Mutant cartilage and lung exhibit a substantial decrease in chondroitin 4-sulfate and an increase in nonsulfated chondroitin compared with wild type tissue.</text>
</comment>
<comment type="similarity">
    <text evidence="8">Belongs to the inositol monophosphatase superfamily.</text>
</comment>
<sequence length="356" mass="38616">MAPMGIRLSPLGVAVFFLLGLGVLYHLYSGFLAGRFSLFGLGSEPAAGEAEVASDGGTVDLREMLAVAVLAAERGGDEVRRVRESNVLHEKSKGKTREGADDKMTSGDVLSNRKMFYLLKTAFPNVQINTEEHVDASDKEVIVWNRKIPEDILKEIAAPKEVPAESVTVWIDPLDATQEYTEDLRKYVTTMVCVAVNGKPVLGVIHKPFSEYTAWAMVDGGSNVKARSSYNEKTPKIIVSRSHAGMVKQVALQTFGNQTSIIPAGGAGYKVLALLDVPDMTQEKADLYIHVTYIKKWDICAGNAILKALGGHMTTLNGEEISYTGSDGIEGGLLASIRMNHQALVRKLPDLEKSGH</sequence>
<name>IMPA3_MOUSE</name>
<accession>Q80V26</accession>
<accession>A6H6P6</accession>
<feature type="chain" id="PRO_0000289042" description="Golgi-resident adenosine 3',5'-bisphosphate 3'-phosphatase">
    <location>
        <begin position="1"/>
        <end position="356"/>
    </location>
</feature>
<feature type="topological domain" description="Cytoplasmic" evidence="4">
    <location>
        <begin position="1"/>
        <end position="12"/>
    </location>
</feature>
<feature type="transmembrane region" description="Helical" evidence="4">
    <location>
        <begin position="13"/>
        <end position="33"/>
    </location>
</feature>
<feature type="topological domain" description="Lumenal" evidence="4">
    <location>
        <begin position="34"/>
        <end position="356"/>
    </location>
</feature>
<feature type="region of interest" description="Disordered" evidence="5">
    <location>
        <begin position="84"/>
        <end position="104"/>
    </location>
</feature>
<feature type="active site" description="Proton acceptor" evidence="3">
    <location>
        <position position="108"/>
    </location>
</feature>
<feature type="active site" description="Proton acceptor" evidence="3">
    <location>
        <position position="177"/>
    </location>
</feature>
<feature type="binding site" evidence="3">
    <location>
        <position position="131"/>
    </location>
    <ligand>
        <name>Mg(2+)</name>
        <dbReference type="ChEBI" id="CHEBI:18420"/>
        <label>1</label>
    </ligand>
</feature>
<feature type="binding site" evidence="3">
    <location>
        <position position="131"/>
    </location>
    <ligand>
        <name>Mg(2+)</name>
        <dbReference type="ChEBI" id="CHEBI:18420"/>
        <label>3</label>
    </ligand>
</feature>
<feature type="binding site" evidence="3">
    <location>
        <position position="172"/>
    </location>
    <ligand>
        <name>Mg(2+)</name>
        <dbReference type="ChEBI" id="CHEBI:18420"/>
        <label>1</label>
    </ligand>
</feature>
<feature type="binding site" evidence="3">
    <location>
        <position position="172"/>
    </location>
    <ligand>
        <name>Mg(2+)</name>
        <dbReference type="ChEBI" id="CHEBI:18420"/>
        <label>2</label>
    </ligand>
</feature>
<feature type="binding site" evidence="3">
    <location>
        <position position="174"/>
    </location>
    <ligand>
        <name>Mg(2+)</name>
        <dbReference type="ChEBI" id="CHEBI:18420"/>
        <label>1</label>
    </ligand>
</feature>
<feature type="binding site" evidence="3">
    <location>
        <position position="175"/>
    </location>
    <ligand>
        <name>Mg(2+)</name>
        <dbReference type="ChEBI" id="CHEBI:18420"/>
        <label>2</label>
    </ligand>
</feature>
<feature type="binding site" evidence="3">
    <location>
        <position position="240"/>
    </location>
    <ligand>
        <name>AMP</name>
        <dbReference type="ChEBI" id="CHEBI:456215"/>
    </ligand>
</feature>
<feature type="binding site" evidence="3">
    <location>
        <position position="243"/>
    </location>
    <ligand>
        <name>AMP</name>
        <dbReference type="ChEBI" id="CHEBI:456215"/>
    </ligand>
</feature>
<feature type="binding site" evidence="3">
    <location>
        <position position="266"/>
    </location>
    <ligand>
        <name>AMP</name>
        <dbReference type="ChEBI" id="CHEBI:456215"/>
    </ligand>
</feature>
<feature type="binding site" evidence="3">
    <location>
        <position position="270"/>
    </location>
    <ligand>
        <name>AMP</name>
        <dbReference type="ChEBI" id="CHEBI:456215"/>
    </ligand>
</feature>
<feature type="binding site" evidence="3">
    <location>
        <position position="298"/>
    </location>
    <ligand>
        <name>Mg(2+)</name>
        <dbReference type="ChEBI" id="CHEBI:18420"/>
        <label>2</label>
    </ligand>
</feature>
<feature type="modified residue" description="N-acetylmethionine" evidence="2">
    <location>
        <position position="1"/>
    </location>
</feature>
<feature type="glycosylation site" description="N-linked (GlcNAc...) asparagine" evidence="4">
    <location>
        <position position="257"/>
    </location>
</feature>
<protein>
    <recommendedName>
        <fullName evidence="9">Golgi-resident adenosine 3',5'-bisphosphate 3'-phosphatase</fullName>
        <shortName evidence="7">Golgi-resident PAP phosphatase</shortName>
        <shortName evidence="7">gPAPP</shortName>
        <ecNumber evidence="6">3.1.3.7</ecNumber>
    </recommendedName>
    <alternativeName>
        <fullName>3'(2'), 5'-bisphosphate nucleotidase 2</fullName>
    </alternativeName>
    <alternativeName>
        <fullName evidence="7">Inositol monophosphatase domain-containing protein 1</fullName>
    </alternativeName>
    <alternativeName>
        <fullName evidence="2">Myo-inositol monophosphatase A3</fullName>
    </alternativeName>
    <alternativeName>
        <fullName evidence="7">Phosphoadenosine phosphate 3'-nucleotidase</fullName>
    </alternativeName>
</protein>
<proteinExistence type="evidence at protein level"/>